<protein>
    <recommendedName>
        <fullName>Osteoclast stimulatory transmembrane protein</fullName>
        <shortName>OC-STAMP</shortName>
    </recommendedName>
</protein>
<evidence type="ECO:0000250" key="1"/>
<evidence type="ECO:0000255" key="2"/>
<evidence type="ECO:0000305" key="3"/>
<name>OCSTP_HUMAN</name>
<sequence>MPGHPGAAEQLVKTGWRSWHLGFWKALAPLQAAWDAFSQPVPASCGQLLTQLLLCASLAAAAAGLVYHWLASLLLYPPGPSAMVATVCGLLVFLSLGLVPPVRCLFALSVPTLGMEQGRRLLLSYSTATLAIAVVPNVLANVGAAGQVLRCVTEGSLESLLNTTHQLHAASRALGPTGQAGSRGLTFEAQDNGSAFYLHMLRVTQQVLEDFSGLESLARAAALGTQRVVTGLFMLGLLVESAWYLHCYLTDLRFDNIYATQQLTQRLAQAQATHLLAPPPTWLLQAAQLRLSQEELLSCLLRLGLLALLLVATAVAVATDHVAFLLAQATVDWAQKLPTVPITLTVKYDVAYTVLGFIPFLFNQLAPESPFLSVHSSYQWELRLTSARCPLLPARRPRAAAPLAAGALQLLAGSTVLLEAYARRLRHAIAASFFTAQEARRVRHLHARLQRRHDRHQGQQLPLGDPSCVPTPRPACKPPAWIDYRLDALRTESSEGEGKELWSCRDLSCNLGPVPPPCVTLGKSLHLSEPRFLHLHNDSIFTIDVTYFPRRDVVRMEGNTGHDRPG</sequence>
<feature type="chain" id="PRO_0000342121" description="Osteoclast stimulatory transmembrane protein">
    <location>
        <begin position="1"/>
        <end position="566"/>
    </location>
</feature>
<feature type="topological domain" description="Cytoplasmic" evidence="2">
    <location>
        <begin position="1"/>
        <end position="51"/>
    </location>
</feature>
<feature type="transmembrane region" description="Helical" evidence="2">
    <location>
        <begin position="52"/>
        <end position="72"/>
    </location>
</feature>
<feature type="topological domain" description="Extracellular" evidence="2">
    <location>
        <begin position="73"/>
        <end position="81"/>
    </location>
</feature>
<feature type="transmembrane region" description="Helical" evidence="2">
    <location>
        <begin position="82"/>
        <end position="102"/>
    </location>
</feature>
<feature type="topological domain" description="Cytoplasmic" evidence="2">
    <location>
        <begin position="103"/>
        <end position="128"/>
    </location>
</feature>
<feature type="transmembrane region" description="Helical" evidence="2">
    <location>
        <begin position="129"/>
        <end position="149"/>
    </location>
</feature>
<feature type="topological domain" description="Extracellular" evidence="2">
    <location>
        <begin position="150"/>
        <end position="227"/>
    </location>
</feature>
<feature type="transmembrane region" description="Helical" evidence="2">
    <location>
        <begin position="228"/>
        <end position="248"/>
    </location>
</feature>
<feature type="topological domain" description="Cytoplasmic" evidence="2">
    <location>
        <begin position="249"/>
        <end position="304"/>
    </location>
</feature>
<feature type="transmembrane region" description="Helical" evidence="2">
    <location>
        <begin position="305"/>
        <end position="325"/>
    </location>
</feature>
<feature type="topological domain" description="Extracellular" evidence="2">
    <location>
        <begin position="326"/>
        <end position="398"/>
    </location>
</feature>
<feature type="transmembrane region" description="Helical" evidence="2">
    <location>
        <begin position="399"/>
        <end position="419"/>
    </location>
</feature>
<feature type="topological domain" description="Cytoplasmic" evidence="2">
    <location>
        <begin position="420"/>
        <end position="566"/>
    </location>
</feature>
<feature type="sequence variant" id="VAR_050919" description="In dbSNP:rs847079.">
    <original>P</original>
    <variation>S</variation>
    <location>
        <position position="565"/>
    </location>
</feature>
<keyword id="KW-0221">Differentiation</keyword>
<keyword id="KW-0472">Membrane</keyword>
<keyword id="KW-1185">Reference proteome</keyword>
<keyword id="KW-0812">Transmembrane</keyword>
<keyword id="KW-1133">Transmembrane helix</keyword>
<dbReference type="EMBL" id="AL034424">
    <property type="status" value="NOT_ANNOTATED_CDS"/>
    <property type="molecule type" value="Genomic_DNA"/>
</dbReference>
<dbReference type="EMBL" id="AL935075">
    <property type="status" value="NOT_ANNOTATED_CDS"/>
    <property type="molecule type" value="mRNA"/>
</dbReference>
<dbReference type="EMBL" id="AL935089">
    <property type="status" value="NOT_ANNOTATED_CDS"/>
    <property type="molecule type" value="mRNA"/>
</dbReference>
<dbReference type="EMBL" id="BX281477">
    <property type="status" value="NOT_ANNOTATED_CDS"/>
    <property type="molecule type" value="mRNA"/>
</dbReference>
<dbReference type="CCDS" id="CCDS54468.1"/>
<dbReference type="RefSeq" id="NP_542452.1">
    <property type="nucleotide sequence ID" value="NM_080721.3"/>
</dbReference>
<dbReference type="STRING" id="9606.ENSP00000279028"/>
<dbReference type="TCDB" id="1.N.1.1.1">
    <property type="family name" value="the osteoclast fusion complex (ofc) family"/>
</dbReference>
<dbReference type="PhosphoSitePlus" id="Q9BR26"/>
<dbReference type="BioMuta" id="OCSTAMP"/>
<dbReference type="DMDM" id="193806176"/>
<dbReference type="PaxDb" id="9606-ENSP00000279028"/>
<dbReference type="ProteomicsDB" id="78739"/>
<dbReference type="Antibodypedia" id="28113">
    <property type="antibodies" value="26 antibodies from 11 providers"/>
</dbReference>
<dbReference type="DNASU" id="128506"/>
<dbReference type="Ensembl" id="ENST00000279028.3">
    <property type="protein sequence ID" value="ENSP00000279028.2"/>
    <property type="gene ID" value="ENSG00000149635.3"/>
</dbReference>
<dbReference type="GeneID" id="128506"/>
<dbReference type="KEGG" id="hsa:128506"/>
<dbReference type="MANE-Select" id="ENST00000279028.3">
    <property type="protein sequence ID" value="ENSP00000279028.2"/>
    <property type="RefSeq nucleotide sequence ID" value="NM_080721.3"/>
    <property type="RefSeq protein sequence ID" value="NP_542452.1"/>
</dbReference>
<dbReference type="UCSC" id="uc010zxu.3">
    <property type="organism name" value="human"/>
</dbReference>
<dbReference type="AGR" id="HGNC:16116"/>
<dbReference type="CTD" id="128506"/>
<dbReference type="DisGeNET" id="128506"/>
<dbReference type="GeneCards" id="OCSTAMP"/>
<dbReference type="HGNC" id="HGNC:16116">
    <property type="gene designation" value="OCSTAMP"/>
</dbReference>
<dbReference type="HPA" id="ENSG00000149635">
    <property type="expression patterns" value="Not detected"/>
</dbReference>
<dbReference type="MIM" id="620432">
    <property type="type" value="gene"/>
</dbReference>
<dbReference type="neXtProt" id="NX_Q9BR26"/>
<dbReference type="OpenTargets" id="ENSG00000149635"/>
<dbReference type="PharmGKB" id="PA25664"/>
<dbReference type="VEuPathDB" id="HostDB:ENSG00000149635"/>
<dbReference type="eggNOG" id="ENOG502QWNK">
    <property type="taxonomic scope" value="Eukaryota"/>
</dbReference>
<dbReference type="GeneTree" id="ENSGT00940000153269"/>
<dbReference type="HOGENOM" id="CLU_045128_0_0_1"/>
<dbReference type="InParanoid" id="Q9BR26"/>
<dbReference type="OMA" id="ARCVFSM"/>
<dbReference type="OrthoDB" id="9947082at2759"/>
<dbReference type="PAN-GO" id="Q9BR26">
    <property type="GO annotations" value="0 GO annotations based on evolutionary models"/>
</dbReference>
<dbReference type="PhylomeDB" id="Q9BR26"/>
<dbReference type="TreeFam" id="TF332562"/>
<dbReference type="PathwayCommons" id="Q9BR26"/>
<dbReference type="SignaLink" id="Q9BR26"/>
<dbReference type="BioGRID-ORCS" id="128506">
    <property type="hits" value="17 hits in 1141 CRISPR screens"/>
</dbReference>
<dbReference type="GenomeRNAi" id="128506"/>
<dbReference type="Pharos" id="Q9BR26">
    <property type="development level" value="Tdark"/>
</dbReference>
<dbReference type="PRO" id="PR:Q9BR26"/>
<dbReference type="Proteomes" id="UP000005640">
    <property type="component" value="Chromosome 20"/>
</dbReference>
<dbReference type="RNAct" id="Q9BR26">
    <property type="molecule type" value="protein"/>
</dbReference>
<dbReference type="Bgee" id="ENSG00000149635">
    <property type="expression patterns" value="Expressed in adult mammalian kidney and 3 other cell types or tissues"/>
</dbReference>
<dbReference type="GO" id="GO:0016020">
    <property type="term" value="C:membrane"/>
    <property type="evidence" value="ECO:0007669"/>
    <property type="project" value="UniProtKB-SubCell"/>
</dbReference>
<dbReference type="GO" id="GO:0071391">
    <property type="term" value="P:cellular response to estrogen stimulus"/>
    <property type="evidence" value="ECO:0000250"/>
    <property type="project" value="UniProtKB"/>
</dbReference>
<dbReference type="GO" id="GO:0071356">
    <property type="term" value="P:cellular response to tumor necrosis factor"/>
    <property type="evidence" value="ECO:0000250"/>
    <property type="project" value="UniProtKB"/>
</dbReference>
<dbReference type="GO" id="GO:0072674">
    <property type="term" value="P:multinuclear osteoclast differentiation"/>
    <property type="evidence" value="ECO:0000250"/>
    <property type="project" value="UniProtKB"/>
</dbReference>
<dbReference type="GO" id="GO:0034241">
    <property type="term" value="P:positive regulation of macrophage fusion"/>
    <property type="evidence" value="ECO:0007669"/>
    <property type="project" value="Ensembl"/>
</dbReference>
<dbReference type="GO" id="GO:0045672">
    <property type="term" value="P:positive regulation of osteoclast differentiation"/>
    <property type="evidence" value="ECO:0000250"/>
    <property type="project" value="UniProtKB"/>
</dbReference>
<dbReference type="GO" id="GO:0090290">
    <property type="term" value="P:positive regulation of osteoclast proliferation"/>
    <property type="evidence" value="ECO:0000250"/>
    <property type="project" value="UniProtKB"/>
</dbReference>
<dbReference type="InterPro" id="IPR051856">
    <property type="entry name" value="CSR-E3_Ligase_Protein"/>
</dbReference>
<dbReference type="InterPro" id="IPR012858">
    <property type="entry name" value="DC_STAMP-like"/>
</dbReference>
<dbReference type="PANTHER" id="PTHR21041">
    <property type="entry name" value="DENDRITIC CELL-SPECIFIC TRANSMEMBRANE PROTEIN"/>
    <property type="match status" value="1"/>
</dbReference>
<dbReference type="PANTHER" id="PTHR21041:SF3">
    <property type="entry name" value="OSTEOCLAST STIMULATORY TRANSMEMBRANE PROTEIN"/>
    <property type="match status" value="1"/>
</dbReference>
<dbReference type="Pfam" id="PF07782">
    <property type="entry name" value="DC_STAMP"/>
    <property type="match status" value="1"/>
</dbReference>
<gene>
    <name type="primary">OCSTAMP</name>
    <name type="synonym">C20orf123</name>
</gene>
<proteinExistence type="evidence at transcript level"/>
<comment type="function">
    <text evidence="1">Probable cell surface receptor that plays a role in cellular fusion and cell differentiation. Cooperates with DCSTAMP in modulating cell-cell fusion in both osteoclasts and foreign body giant cells (FBGCs). Involved in osteoclast bone resorption. Promotes osteoclast differentiation and may play a role in the multinucleated osteoclast maturation (By similarity).</text>
</comment>
<comment type="subcellular location">
    <subcellularLocation>
        <location evidence="3">Membrane</location>
        <topology evidence="3">Multi-pass membrane protein</topology>
    </subcellularLocation>
</comment>
<comment type="sequence caution" evidence="3">
    <conflict type="erroneous initiation">
        <sequence resource="EMBL" id="AL935075"/>
    </conflict>
    <text>Extended N-terminus.</text>
</comment>
<reference key="1">
    <citation type="journal article" date="2001" name="Nature">
        <title>The DNA sequence and comparative analysis of human chromosome 20.</title>
        <authorList>
            <person name="Deloukas P."/>
            <person name="Matthews L.H."/>
            <person name="Ashurst J.L."/>
            <person name="Burton J."/>
            <person name="Gilbert J.G.R."/>
            <person name="Jones M."/>
            <person name="Stavrides G."/>
            <person name="Almeida J.P."/>
            <person name="Babbage A.K."/>
            <person name="Bagguley C.L."/>
            <person name="Bailey J."/>
            <person name="Barlow K.F."/>
            <person name="Bates K.N."/>
            <person name="Beard L.M."/>
            <person name="Beare D.M."/>
            <person name="Beasley O.P."/>
            <person name="Bird C.P."/>
            <person name="Blakey S.E."/>
            <person name="Bridgeman A.M."/>
            <person name="Brown A.J."/>
            <person name="Buck D."/>
            <person name="Burrill W.D."/>
            <person name="Butler A.P."/>
            <person name="Carder C."/>
            <person name="Carter N.P."/>
            <person name="Chapman J.C."/>
            <person name="Clamp M."/>
            <person name="Clark G."/>
            <person name="Clark L.N."/>
            <person name="Clark S.Y."/>
            <person name="Clee C.M."/>
            <person name="Clegg S."/>
            <person name="Cobley V.E."/>
            <person name="Collier R.E."/>
            <person name="Connor R.E."/>
            <person name="Corby N.R."/>
            <person name="Coulson A."/>
            <person name="Coville G.J."/>
            <person name="Deadman R."/>
            <person name="Dhami P.D."/>
            <person name="Dunn M."/>
            <person name="Ellington A.G."/>
            <person name="Frankland J.A."/>
            <person name="Fraser A."/>
            <person name="French L."/>
            <person name="Garner P."/>
            <person name="Grafham D.V."/>
            <person name="Griffiths C."/>
            <person name="Griffiths M.N.D."/>
            <person name="Gwilliam R."/>
            <person name="Hall R.E."/>
            <person name="Hammond S."/>
            <person name="Harley J.L."/>
            <person name="Heath P.D."/>
            <person name="Ho S."/>
            <person name="Holden J.L."/>
            <person name="Howden P.J."/>
            <person name="Huckle E."/>
            <person name="Hunt A.R."/>
            <person name="Hunt S.E."/>
            <person name="Jekosch K."/>
            <person name="Johnson C.M."/>
            <person name="Johnson D."/>
            <person name="Kay M.P."/>
            <person name="Kimberley A.M."/>
            <person name="King A."/>
            <person name="Knights A."/>
            <person name="Laird G.K."/>
            <person name="Lawlor S."/>
            <person name="Lehvaeslaiho M.H."/>
            <person name="Leversha M.A."/>
            <person name="Lloyd C."/>
            <person name="Lloyd D.M."/>
            <person name="Lovell J.D."/>
            <person name="Marsh V.L."/>
            <person name="Martin S.L."/>
            <person name="McConnachie L.J."/>
            <person name="McLay K."/>
            <person name="McMurray A.A."/>
            <person name="Milne S.A."/>
            <person name="Mistry D."/>
            <person name="Moore M.J.F."/>
            <person name="Mullikin J.C."/>
            <person name="Nickerson T."/>
            <person name="Oliver K."/>
            <person name="Parker A."/>
            <person name="Patel R."/>
            <person name="Pearce T.A.V."/>
            <person name="Peck A.I."/>
            <person name="Phillimore B.J.C.T."/>
            <person name="Prathalingam S.R."/>
            <person name="Plumb R.W."/>
            <person name="Ramsay H."/>
            <person name="Rice C.M."/>
            <person name="Ross M.T."/>
            <person name="Scott C.E."/>
            <person name="Sehra H.K."/>
            <person name="Shownkeen R."/>
            <person name="Sims S."/>
            <person name="Skuce C.D."/>
            <person name="Smith M.L."/>
            <person name="Soderlund C."/>
            <person name="Steward C.A."/>
            <person name="Sulston J.E."/>
            <person name="Swann R.M."/>
            <person name="Sycamore N."/>
            <person name="Taylor R."/>
            <person name="Tee L."/>
            <person name="Thomas D.W."/>
            <person name="Thorpe A."/>
            <person name="Tracey A."/>
            <person name="Tromans A.C."/>
            <person name="Vaudin M."/>
            <person name="Wall M."/>
            <person name="Wallis J.M."/>
            <person name="Whitehead S.L."/>
            <person name="Whittaker P."/>
            <person name="Willey D.L."/>
            <person name="Williams L."/>
            <person name="Williams S.A."/>
            <person name="Wilming L."/>
            <person name="Wray P.W."/>
            <person name="Hubbard T."/>
            <person name="Durbin R.M."/>
            <person name="Bentley D.R."/>
            <person name="Beck S."/>
            <person name="Rogers J."/>
        </authorList>
    </citation>
    <scope>NUCLEOTIDE SEQUENCE [LARGE SCALE GENOMIC DNA]</scope>
</reference>
<reference key="2">
    <citation type="submission" date="2002-10" db="EMBL/GenBank/DDBJ databases">
        <authorList>
            <person name="Ashcroft K."/>
            <person name="Bethel G."/>
            <person name="Bye J.M."/>
            <person name="Howell G.R."/>
            <person name="Huckle E.J."/>
            <person name="Sheridan E."/>
        </authorList>
    </citation>
    <scope>NUCLEOTIDE SEQUENCE [LARGE SCALE MRNA] OF 1-472</scope>
</reference>
<reference key="3">
    <citation type="submission" date="2002-12" db="EMBL/GenBank/DDBJ databases">
        <title>Cloning of human full open reading frames in Gateway(TM) system entry vector (pDONR201).</title>
        <authorList>
            <person name="Ebert L."/>
            <person name="Schick M."/>
            <person name="Neubert P."/>
            <person name="Schatten R."/>
            <person name="Henze S."/>
            <person name="Korn B."/>
        </authorList>
    </citation>
    <scope>NUCLEOTIDE SEQUENCE [LARGE SCALE MRNA] OF 454-566</scope>
</reference>
<organism>
    <name type="scientific">Homo sapiens</name>
    <name type="common">Human</name>
    <dbReference type="NCBI Taxonomy" id="9606"/>
    <lineage>
        <taxon>Eukaryota</taxon>
        <taxon>Metazoa</taxon>
        <taxon>Chordata</taxon>
        <taxon>Craniata</taxon>
        <taxon>Vertebrata</taxon>
        <taxon>Euteleostomi</taxon>
        <taxon>Mammalia</taxon>
        <taxon>Eutheria</taxon>
        <taxon>Euarchontoglires</taxon>
        <taxon>Primates</taxon>
        <taxon>Haplorrhini</taxon>
        <taxon>Catarrhini</taxon>
        <taxon>Hominidae</taxon>
        <taxon>Homo</taxon>
    </lineage>
</organism>
<accession>Q9BR26</accession>